<name>ABDH_ECOBW</name>
<protein>
    <recommendedName>
        <fullName evidence="1">Gamma-aminobutyraldehyde dehydrogenase</fullName>
        <shortName evidence="1">ABALDH</shortName>
        <ecNumber evidence="1">1.2.1.19</ecNumber>
    </recommendedName>
    <alternativeName>
        <fullName evidence="1">1-pyrroline dehydrogenase</fullName>
    </alternativeName>
    <alternativeName>
        <fullName evidence="1">4-aminobutanal dehydrogenase</fullName>
    </alternativeName>
    <alternativeName>
        <fullName evidence="1">5-aminopentanal dehydrogenase</fullName>
        <ecNumber evidence="1">1.2.1.-</ecNumber>
    </alternativeName>
</protein>
<keyword id="KW-0520">NAD</keyword>
<keyword id="KW-0560">Oxidoreductase</keyword>
<evidence type="ECO:0000255" key="1">
    <source>
        <dbReference type="HAMAP-Rule" id="MF_01275"/>
    </source>
</evidence>
<organism>
    <name type="scientific">Escherichia coli (strain K12 / MC4100 / BW2952)</name>
    <dbReference type="NCBI Taxonomy" id="595496"/>
    <lineage>
        <taxon>Bacteria</taxon>
        <taxon>Pseudomonadati</taxon>
        <taxon>Pseudomonadota</taxon>
        <taxon>Gammaproteobacteria</taxon>
        <taxon>Enterobacterales</taxon>
        <taxon>Enterobacteriaceae</taxon>
        <taxon>Escherichia</taxon>
    </lineage>
</organism>
<sequence length="474" mass="50830">MQHKLLINGELVSGEGEKQPVYNPATGDVLLEIAEASAEQVDAAVRAADAAFAEWGQTTPKVRAECLLKLADVIEENGQVFAELESRNCGKPLHSAFNDEIPAIVDVFRFFAGAARCLNGLAAGEYLEGHTSMIRRDPLGVVASIAPWNYPLMMAAWKLAPALAAGNCVVLKPSEITPLTALKLAELAKDIFPAGVINILFGRGKTVGDPLTGHPKVRMVSLTGSIATGEHIISHTASSIKRTHMELGGKAPVIVFDDADIEAVVEGVRTFGYYNAGQDCTAACRIYAQKGIYDTLVEKLGAAVATLKSGAPDDESTELGPLSSLAHLERVGKAVEEAKATGHIKVITGGEKRKGNGYYYAPTLLAGALQDDAIVQKEVFGPVVSVTPFDNEEQVVNWANDSQYGLASSVWTKDVGRAHRVSARLQYGCTWVNTHFMLVSEMPHGGQKLSGYGKDMSLYGLEDYTVVRHVMVKH</sequence>
<comment type="function">
    <text evidence="1">Catalyzes the oxidation 4-aminobutanal (gamma-aminobutyraldehyde) to 4-aminobutanoate (gamma-aminobutyrate or GABA). This is the second step in one of two pathways for putrescine degradation, where putrescine is converted into 4-aminobutanoate via 4-aminobutanal. Also functions as a 5-aminopentanal dehydrogenase in a a L-lysine degradation pathway to succinate that proceeds via cadaverine, glutarate and L-2-hydroxyglutarate.</text>
</comment>
<comment type="catalytic activity">
    <reaction evidence="1">
        <text>4-aminobutanal + NAD(+) + H2O = 4-aminobutanoate + NADH + 2 H(+)</text>
        <dbReference type="Rhea" id="RHEA:19105"/>
        <dbReference type="ChEBI" id="CHEBI:15377"/>
        <dbReference type="ChEBI" id="CHEBI:15378"/>
        <dbReference type="ChEBI" id="CHEBI:57540"/>
        <dbReference type="ChEBI" id="CHEBI:57945"/>
        <dbReference type="ChEBI" id="CHEBI:58264"/>
        <dbReference type="ChEBI" id="CHEBI:59888"/>
        <dbReference type="EC" id="1.2.1.19"/>
    </reaction>
    <physiologicalReaction direction="left-to-right" evidence="1">
        <dbReference type="Rhea" id="RHEA:19106"/>
    </physiologicalReaction>
</comment>
<comment type="catalytic activity">
    <reaction evidence="1">
        <text>5-aminopentanal + NAD(+) + H2O = 5-aminopentanoate + NADH + 2 H(+)</text>
        <dbReference type="Rhea" id="RHEA:61632"/>
        <dbReference type="ChEBI" id="CHEBI:15377"/>
        <dbReference type="ChEBI" id="CHEBI:15378"/>
        <dbReference type="ChEBI" id="CHEBI:57540"/>
        <dbReference type="ChEBI" id="CHEBI:57945"/>
        <dbReference type="ChEBI" id="CHEBI:144896"/>
        <dbReference type="ChEBI" id="CHEBI:356010"/>
    </reaction>
    <physiologicalReaction direction="left-to-right" evidence="1">
        <dbReference type="Rhea" id="RHEA:61633"/>
    </physiologicalReaction>
</comment>
<comment type="pathway">
    <text evidence="1">Amine and polyamine degradation; putrescine degradation; 4-aminobutanoate from 4-aminobutanal: step 1/1.</text>
</comment>
<comment type="pathway">
    <text evidence="1">Amino-acid degradation.</text>
</comment>
<comment type="subunit">
    <text evidence="1">Homotetramer.</text>
</comment>
<comment type="miscellaneous">
    <text evidence="1">4-aminobutanal can spontaneously cyclize to 1-pyrroline, and 5-aminopentanal to 1-piperideine.</text>
</comment>
<comment type="similarity">
    <text evidence="1">Belongs to the aldehyde dehydrogenase family. Gamma-aminobutyraldehyde dehydrogenase subfamily.</text>
</comment>
<gene>
    <name evidence="1" type="primary">patD</name>
    <name type="ordered locus">BWG_1269</name>
</gene>
<reference key="1">
    <citation type="journal article" date="2009" name="J. Bacteriol.">
        <title>Genomic sequencing reveals regulatory mutations and recombinational events in the widely used MC4100 lineage of Escherichia coli K-12.</title>
        <authorList>
            <person name="Ferenci T."/>
            <person name="Zhou Z."/>
            <person name="Betteridge T."/>
            <person name="Ren Y."/>
            <person name="Liu Y."/>
            <person name="Feng L."/>
            <person name="Reeves P.R."/>
            <person name="Wang L."/>
        </authorList>
    </citation>
    <scope>NUCLEOTIDE SEQUENCE [LARGE SCALE GENOMIC DNA]</scope>
    <source>
        <strain>K12 / MC4100 / BW2952</strain>
    </source>
</reference>
<proteinExistence type="inferred from homology"/>
<accession>C4ZVI3</accession>
<feature type="chain" id="PRO_1000214196" description="Gamma-aminobutyraldehyde dehydrogenase">
    <location>
        <begin position="1"/>
        <end position="474"/>
    </location>
</feature>
<feature type="active site" evidence="1">
    <location>
        <position position="246"/>
    </location>
</feature>
<feature type="active site" description="Nucleophile" evidence="1">
    <location>
        <position position="280"/>
    </location>
</feature>
<feature type="binding site" evidence="1">
    <location>
        <begin position="146"/>
        <end position="148"/>
    </location>
    <ligand>
        <name>NAD(+)</name>
        <dbReference type="ChEBI" id="CHEBI:57540"/>
    </ligand>
</feature>
<feature type="binding site" evidence="1">
    <location>
        <begin position="172"/>
        <end position="175"/>
    </location>
    <ligand>
        <name>NAD(+)</name>
        <dbReference type="ChEBI" id="CHEBI:57540"/>
    </ligand>
</feature>
<feature type="binding site" evidence="1">
    <location>
        <position position="209"/>
    </location>
    <ligand>
        <name>NAD(+)</name>
        <dbReference type="ChEBI" id="CHEBI:57540"/>
    </ligand>
</feature>
<feature type="binding site" evidence="1">
    <location>
        <begin position="225"/>
        <end position="228"/>
    </location>
    <ligand>
        <name>NAD(+)</name>
        <dbReference type="ChEBI" id="CHEBI:57540"/>
    </ligand>
</feature>
<feature type="binding site" evidence="1">
    <location>
        <position position="280"/>
    </location>
    <ligand>
        <name>NAD(+)</name>
        <dbReference type="ChEBI" id="CHEBI:57540"/>
    </ligand>
</feature>
<dbReference type="EC" id="1.2.1.19" evidence="1"/>
<dbReference type="EC" id="1.2.1.-" evidence="1"/>
<dbReference type="EMBL" id="CP001396">
    <property type="protein sequence ID" value="ACR63729.1"/>
    <property type="molecule type" value="Genomic_DNA"/>
</dbReference>
<dbReference type="RefSeq" id="WP_001163872.1">
    <property type="nucleotide sequence ID" value="NC_012759.1"/>
</dbReference>
<dbReference type="SMR" id="C4ZVI3"/>
<dbReference type="KEGG" id="ebw:BWG_1269"/>
<dbReference type="HOGENOM" id="CLU_005391_1_0_6"/>
<dbReference type="UniPathway" id="UPA00188">
    <property type="reaction ID" value="UER00292"/>
</dbReference>
<dbReference type="GO" id="GO:0019145">
    <property type="term" value="F:aminobutyraldehyde dehydrogenase (NAD+) activity"/>
    <property type="evidence" value="ECO:0007669"/>
    <property type="project" value="UniProtKB-UniRule"/>
</dbReference>
<dbReference type="GO" id="GO:0051287">
    <property type="term" value="F:NAD binding"/>
    <property type="evidence" value="ECO:0007669"/>
    <property type="project" value="UniProtKB-UniRule"/>
</dbReference>
<dbReference type="GO" id="GO:0019477">
    <property type="term" value="P:L-lysine catabolic process"/>
    <property type="evidence" value="ECO:0007669"/>
    <property type="project" value="UniProtKB-UniRule"/>
</dbReference>
<dbReference type="GO" id="GO:0009447">
    <property type="term" value="P:putrescine catabolic process"/>
    <property type="evidence" value="ECO:0007669"/>
    <property type="project" value="UniProtKB-UniRule"/>
</dbReference>
<dbReference type="CDD" id="cd07092">
    <property type="entry name" value="ALDH_ABALDH-YdcW"/>
    <property type="match status" value="1"/>
</dbReference>
<dbReference type="FunFam" id="3.40.605.10:FF:000001">
    <property type="entry name" value="Aldehyde dehydrogenase 1"/>
    <property type="match status" value="1"/>
</dbReference>
<dbReference type="FunFam" id="3.40.309.10:FF:000010">
    <property type="entry name" value="Gamma-aminobutyraldehyde dehydrogenase"/>
    <property type="match status" value="1"/>
</dbReference>
<dbReference type="Gene3D" id="3.40.605.10">
    <property type="entry name" value="Aldehyde Dehydrogenase, Chain A, domain 1"/>
    <property type="match status" value="1"/>
</dbReference>
<dbReference type="Gene3D" id="3.40.309.10">
    <property type="entry name" value="Aldehyde Dehydrogenase, Chain A, domain 2"/>
    <property type="match status" value="1"/>
</dbReference>
<dbReference type="HAMAP" id="MF_01275">
    <property type="entry name" value="Aldedh_Prr"/>
    <property type="match status" value="1"/>
</dbReference>
<dbReference type="InterPro" id="IPR016161">
    <property type="entry name" value="Ald_DH/histidinol_DH"/>
</dbReference>
<dbReference type="InterPro" id="IPR016163">
    <property type="entry name" value="Ald_DH_C"/>
</dbReference>
<dbReference type="InterPro" id="IPR029510">
    <property type="entry name" value="Ald_DH_CS_GLU"/>
</dbReference>
<dbReference type="InterPro" id="IPR016162">
    <property type="entry name" value="Ald_DH_N"/>
</dbReference>
<dbReference type="InterPro" id="IPR015590">
    <property type="entry name" value="Aldehyde_DH_dom"/>
</dbReference>
<dbReference type="InterPro" id="IPR015657">
    <property type="entry name" value="Aminobutyraldehyde_DH"/>
</dbReference>
<dbReference type="InterPro" id="IPR017749">
    <property type="entry name" value="PatD"/>
</dbReference>
<dbReference type="NCBIfam" id="TIGR03374">
    <property type="entry name" value="ABALDH"/>
    <property type="match status" value="1"/>
</dbReference>
<dbReference type="NCBIfam" id="NF010000">
    <property type="entry name" value="PRK13473.1"/>
    <property type="match status" value="1"/>
</dbReference>
<dbReference type="PANTHER" id="PTHR11699">
    <property type="entry name" value="ALDEHYDE DEHYDROGENASE-RELATED"/>
    <property type="match status" value="1"/>
</dbReference>
<dbReference type="Pfam" id="PF00171">
    <property type="entry name" value="Aldedh"/>
    <property type="match status" value="1"/>
</dbReference>
<dbReference type="SUPFAM" id="SSF53720">
    <property type="entry name" value="ALDH-like"/>
    <property type="match status" value="1"/>
</dbReference>
<dbReference type="PROSITE" id="PS00687">
    <property type="entry name" value="ALDEHYDE_DEHYDR_GLU"/>
    <property type="match status" value="1"/>
</dbReference>